<organism>
    <name type="scientific">Synechococcus sp. (strain CC9605)</name>
    <dbReference type="NCBI Taxonomy" id="110662"/>
    <lineage>
        <taxon>Bacteria</taxon>
        <taxon>Bacillati</taxon>
        <taxon>Cyanobacteriota</taxon>
        <taxon>Cyanophyceae</taxon>
        <taxon>Synechococcales</taxon>
        <taxon>Synechococcaceae</taxon>
        <taxon>Synechococcus</taxon>
    </lineage>
</organism>
<comment type="function">
    <text evidence="1">Associates with the EF-Tu.GDP complex and induces the exchange of GDP to GTP. It remains bound to the aminoacyl-tRNA.EF-Tu.GTP complex up to the GTP hydrolysis stage on the ribosome.</text>
</comment>
<comment type="subcellular location">
    <subcellularLocation>
        <location evidence="1">Cytoplasm</location>
    </subcellularLocation>
</comment>
<comment type="similarity">
    <text evidence="1">Belongs to the EF-Ts family.</text>
</comment>
<proteinExistence type="inferred from homology"/>
<gene>
    <name evidence="1" type="primary">tsf</name>
    <name type="ordered locus">Syncc9605_1223</name>
</gene>
<dbReference type="EMBL" id="CP000110">
    <property type="protein sequence ID" value="ABB34978.1"/>
    <property type="molecule type" value="Genomic_DNA"/>
</dbReference>
<dbReference type="RefSeq" id="WP_011364197.1">
    <property type="nucleotide sequence ID" value="NC_007516.1"/>
</dbReference>
<dbReference type="SMR" id="Q3AKA4"/>
<dbReference type="STRING" id="110662.Syncc9605_1223"/>
<dbReference type="KEGG" id="syd:Syncc9605_1223"/>
<dbReference type="eggNOG" id="COG0264">
    <property type="taxonomic scope" value="Bacteria"/>
</dbReference>
<dbReference type="HOGENOM" id="CLU_047155_1_1_3"/>
<dbReference type="OrthoDB" id="9808348at2"/>
<dbReference type="GO" id="GO:0005737">
    <property type="term" value="C:cytoplasm"/>
    <property type="evidence" value="ECO:0007669"/>
    <property type="project" value="UniProtKB-SubCell"/>
</dbReference>
<dbReference type="GO" id="GO:0003746">
    <property type="term" value="F:translation elongation factor activity"/>
    <property type="evidence" value="ECO:0007669"/>
    <property type="project" value="UniProtKB-UniRule"/>
</dbReference>
<dbReference type="CDD" id="cd14275">
    <property type="entry name" value="UBA_EF-Ts"/>
    <property type="match status" value="1"/>
</dbReference>
<dbReference type="FunFam" id="1.10.286.20:FF:000001">
    <property type="entry name" value="Elongation factor Ts"/>
    <property type="match status" value="1"/>
</dbReference>
<dbReference type="FunFam" id="1.10.8.10:FF:000001">
    <property type="entry name" value="Elongation factor Ts"/>
    <property type="match status" value="1"/>
</dbReference>
<dbReference type="Gene3D" id="1.10.286.20">
    <property type="match status" value="1"/>
</dbReference>
<dbReference type="Gene3D" id="1.10.8.10">
    <property type="entry name" value="DNA helicase RuvA subunit, C-terminal domain"/>
    <property type="match status" value="1"/>
</dbReference>
<dbReference type="Gene3D" id="3.30.479.20">
    <property type="entry name" value="Elongation factor Ts, dimerisation domain"/>
    <property type="match status" value="1"/>
</dbReference>
<dbReference type="HAMAP" id="MF_00050">
    <property type="entry name" value="EF_Ts"/>
    <property type="match status" value="1"/>
</dbReference>
<dbReference type="InterPro" id="IPR036402">
    <property type="entry name" value="EF-Ts_dimer_sf"/>
</dbReference>
<dbReference type="InterPro" id="IPR001816">
    <property type="entry name" value="Transl_elong_EFTs/EF1B"/>
</dbReference>
<dbReference type="InterPro" id="IPR014039">
    <property type="entry name" value="Transl_elong_EFTs/EF1B_dimer"/>
</dbReference>
<dbReference type="InterPro" id="IPR018101">
    <property type="entry name" value="Transl_elong_Ts_CS"/>
</dbReference>
<dbReference type="InterPro" id="IPR009060">
    <property type="entry name" value="UBA-like_sf"/>
</dbReference>
<dbReference type="NCBIfam" id="TIGR00116">
    <property type="entry name" value="tsf"/>
    <property type="match status" value="1"/>
</dbReference>
<dbReference type="PANTHER" id="PTHR11741">
    <property type="entry name" value="ELONGATION FACTOR TS"/>
    <property type="match status" value="1"/>
</dbReference>
<dbReference type="PANTHER" id="PTHR11741:SF10">
    <property type="entry name" value="POLYPROTEIN OF EF-TS, CHLOROPLASTIC"/>
    <property type="match status" value="1"/>
</dbReference>
<dbReference type="Pfam" id="PF00889">
    <property type="entry name" value="EF_TS"/>
    <property type="match status" value="1"/>
</dbReference>
<dbReference type="SUPFAM" id="SSF54713">
    <property type="entry name" value="Elongation factor Ts (EF-Ts), dimerisation domain"/>
    <property type="match status" value="1"/>
</dbReference>
<dbReference type="SUPFAM" id="SSF46934">
    <property type="entry name" value="UBA-like"/>
    <property type="match status" value="1"/>
</dbReference>
<dbReference type="PROSITE" id="PS01126">
    <property type="entry name" value="EF_TS_1"/>
    <property type="match status" value="1"/>
</dbReference>
<dbReference type="PROSITE" id="PS01127">
    <property type="entry name" value="EF_TS_2"/>
    <property type="match status" value="1"/>
</dbReference>
<evidence type="ECO:0000255" key="1">
    <source>
        <dbReference type="HAMAP-Rule" id="MF_00050"/>
    </source>
</evidence>
<keyword id="KW-0963">Cytoplasm</keyword>
<keyword id="KW-0251">Elongation factor</keyword>
<keyword id="KW-0648">Protein biosynthesis</keyword>
<reference key="1">
    <citation type="submission" date="2005-07" db="EMBL/GenBank/DDBJ databases">
        <title>Complete sequence of Synechococcus sp. CC9605.</title>
        <authorList>
            <consortium name="US DOE Joint Genome Institute"/>
            <person name="Copeland A."/>
            <person name="Lucas S."/>
            <person name="Lapidus A."/>
            <person name="Barry K."/>
            <person name="Detter J.C."/>
            <person name="Glavina T."/>
            <person name="Hammon N."/>
            <person name="Israni S."/>
            <person name="Pitluck S."/>
            <person name="Schmutz J."/>
            <person name="Martinez M."/>
            <person name="Larimer F."/>
            <person name="Land M."/>
            <person name="Kyrpides N."/>
            <person name="Ivanova N."/>
            <person name="Richardson P."/>
        </authorList>
    </citation>
    <scope>NUCLEOTIDE SEQUENCE [LARGE SCALE GENOMIC DNA]</scope>
    <source>
        <strain>CC9605</strain>
    </source>
</reference>
<feature type="chain" id="PRO_0000241539" description="Elongation factor Ts">
    <location>
        <begin position="1"/>
        <end position="220"/>
    </location>
</feature>
<feature type="region of interest" description="Involved in Mg(2+) ion dislocation from EF-Tu" evidence="1">
    <location>
        <begin position="83"/>
        <end position="86"/>
    </location>
</feature>
<accession>Q3AKA4</accession>
<name>EFTS_SYNSC</name>
<sequence length="220" mass="23983">MAAAVSAKLVKELRDKTGAGMMDCKKALAATEGDANKAVEWLRQKGIASAEKKSGRTAAEGAIGSYIHTGARVGVLVEVNCETDFVARGDMFQSLLRDVSMQVAACPNVEYVTTDEIPNEIREREKAIEMGRDDLEGKPEQMKEKIVEGRIGKRLKELALMEQPFIKDSSITVADLVKQTAGKIGENVKVRRFTRYTLGEGIEVEENDFAAEVASMQNAG</sequence>
<protein>
    <recommendedName>
        <fullName evidence="1">Elongation factor Ts</fullName>
        <shortName evidence="1">EF-Ts</shortName>
    </recommendedName>
</protein>